<accession>P14073</accession>
<evidence type="ECO:0000250" key="1"/>
<evidence type="ECO:0000255" key="2">
    <source>
        <dbReference type="PROSITE-ProRule" id="PRU00711"/>
    </source>
</evidence>
<keyword id="KW-0004">4Fe-4S</keyword>
<keyword id="KW-0903">Direct protein sequencing</keyword>
<keyword id="KW-0249">Electron transport</keyword>
<keyword id="KW-0408">Iron</keyword>
<keyword id="KW-0411">Iron-sulfur</keyword>
<keyword id="KW-0479">Metal-binding</keyword>
<keyword id="KW-0677">Repeat</keyword>
<keyword id="KW-0813">Transport</keyword>
<comment type="function">
    <text>Ferredoxins are iron-sulfur proteins that transfer electrons in a wide variety of metabolic reactions.</text>
</comment>
<comment type="cofactor">
    <cofactor>
        <name>[4Fe-4S] cluster</name>
        <dbReference type="ChEBI" id="CHEBI:49883"/>
    </cofactor>
    <text>Binds 2 [4Fe-4S] clusters.</text>
</comment>
<organism>
    <name type="scientific">Butyribacterium methylotrophicum</name>
    <dbReference type="NCBI Taxonomy" id="1487"/>
    <lineage>
        <taxon>Bacteria</taxon>
        <taxon>Bacillati</taxon>
        <taxon>Bacillota</taxon>
        <taxon>Clostridia</taxon>
        <taxon>Eubacteriales</taxon>
        <taxon>Clostridiaceae</taxon>
        <taxon>Clostridium</taxon>
    </lineage>
</organism>
<name>FER_BUTME</name>
<dbReference type="PIR" id="JU0126">
    <property type="entry name" value="JU0126"/>
</dbReference>
<dbReference type="SMR" id="P14073"/>
<dbReference type="GO" id="GO:0051539">
    <property type="term" value="F:4 iron, 4 sulfur cluster binding"/>
    <property type="evidence" value="ECO:0007669"/>
    <property type="project" value="UniProtKB-KW"/>
</dbReference>
<dbReference type="GO" id="GO:0009055">
    <property type="term" value="F:electron transfer activity"/>
    <property type="evidence" value="ECO:0007669"/>
    <property type="project" value="InterPro"/>
</dbReference>
<dbReference type="GO" id="GO:0046872">
    <property type="term" value="F:metal ion binding"/>
    <property type="evidence" value="ECO:0007669"/>
    <property type="project" value="UniProtKB-KW"/>
</dbReference>
<dbReference type="Gene3D" id="3.30.70.20">
    <property type="match status" value="1"/>
</dbReference>
<dbReference type="InterPro" id="IPR017896">
    <property type="entry name" value="4Fe4S_Fe-S-bd"/>
</dbReference>
<dbReference type="InterPro" id="IPR017900">
    <property type="entry name" value="4Fe4S_Fe_S_CS"/>
</dbReference>
<dbReference type="InterPro" id="IPR000813">
    <property type="entry name" value="7Fe_ferredoxin"/>
</dbReference>
<dbReference type="InterPro" id="IPR050157">
    <property type="entry name" value="PSI_iron-sulfur_center"/>
</dbReference>
<dbReference type="PANTHER" id="PTHR24960:SF79">
    <property type="entry name" value="PHOTOSYSTEM I IRON-SULFUR CENTER"/>
    <property type="match status" value="1"/>
</dbReference>
<dbReference type="PANTHER" id="PTHR24960">
    <property type="entry name" value="PHOTOSYSTEM I IRON-SULFUR CENTER-RELATED"/>
    <property type="match status" value="1"/>
</dbReference>
<dbReference type="Pfam" id="PF00037">
    <property type="entry name" value="Fer4"/>
    <property type="match status" value="2"/>
</dbReference>
<dbReference type="PRINTS" id="PR00354">
    <property type="entry name" value="7FE8SFRDOXIN"/>
</dbReference>
<dbReference type="SUPFAM" id="SSF54862">
    <property type="entry name" value="4Fe-4S ferredoxins"/>
    <property type="match status" value="1"/>
</dbReference>
<dbReference type="PROSITE" id="PS00198">
    <property type="entry name" value="4FE4S_FER_1"/>
    <property type="match status" value="2"/>
</dbReference>
<dbReference type="PROSITE" id="PS51379">
    <property type="entry name" value="4FE4S_FER_2"/>
    <property type="match status" value="2"/>
</dbReference>
<feature type="chain" id="PRO_0000159120" description="Ferredoxin">
    <location>
        <begin position="1"/>
        <end position="55"/>
    </location>
</feature>
<feature type="domain" description="4Fe-4S ferredoxin-type 1" evidence="2">
    <location>
        <begin position="2"/>
        <end position="26"/>
    </location>
</feature>
<feature type="domain" description="4Fe-4S ferredoxin-type 2" evidence="2">
    <location>
        <begin position="27"/>
        <end position="55"/>
    </location>
</feature>
<feature type="binding site" evidence="1">
    <location>
        <position position="8"/>
    </location>
    <ligand>
        <name>[4Fe-4S] cluster</name>
        <dbReference type="ChEBI" id="CHEBI:49883"/>
        <label>1</label>
    </ligand>
</feature>
<feature type="binding site" evidence="1">
    <location>
        <position position="11"/>
    </location>
    <ligand>
        <name>[4Fe-4S] cluster</name>
        <dbReference type="ChEBI" id="CHEBI:49883"/>
        <label>1</label>
    </ligand>
</feature>
<feature type="binding site" evidence="1">
    <location>
        <position position="14"/>
    </location>
    <ligand>
        <name>[4Fe-4S] cluster</name>
        <dbReference type="ChEBI" id="CHEBI:49883"/>
        <label>1</label>
    </ligand>
</feature>
<feature type="binding site" evidence="1">
    <location>
        <position position="18"/>
    </location>
    <ligand>
        <name>[4Fe-4S] cluster</name>
        <dbReference type="ChEBI" id="CHEBI:49883"/>
        <label>2</label>
    </ligand>
</feature>
<feature type="binding site" evidence="1">
    <location>
        <position position="36"/>
    </location>
    <ligand>
        <name>[4Fe-4S] cluster</name>
        <dbReference type="ChEBI" id="CHEBI:49883"/>
        <label>2</label>
    </ligand>
</feature>
<feature type="binding site" evidence="1">
    <location>
        <position position="39"/>
    </location>
    <ligand>
        <name>[4Fe-4S] cluster</name>
        <dbReference type="ChEBI" id="CHEBI:49883"/>
        <label>2</label>
    </ligand>
</feature>
<feature type="binding site" evidence="1">
    <location>
        <position position="42"/>
    </location>
    <ligand>
        <name>[4Fe-4S] cluster</name>
        <dbReference type="ChEBI" id="CHEBI:49883"/>
        <label>2</label>
    </ligand>
</feature>
<feature type="binding site" evidence="1">
    <location>
        <position position="46"/>
    </location>
    <ligand>
        <name>[4Fe-4S] cluster</name>
        <dbReference type="ChEBI" id="CHEBI:49883"/>
        <label>1</label>
    </ligand>
</feature>
<reference key="1">
    <citation type="journal article" date="1989" name="J. Biochem.">
        <title>Ferredoxin and rubredoxin from Butyribacterium methylotrophicum: complete primary structures and construction of phylogenetic trees.</title>
        <authorList>
            <person name="Saeki K."/>
            <person name="Yao Y."/>
            <person name="Wakabayashi S."/>
            <person name="Shen G.-J."/>
            <person name="Zeikus J.G."/>
            <person name="Matsubara H."/>
        </authorList>
    </citation>
    <scope>PROTEIN SEQUENCE</scope>
</reference>
<sequence>AYKITDECIACGSCADQCPVEAISEGSIYEIDEALCTDCGACADQCPVEAIVPED</sequence>
<protein>
    <recommendedName>
        <fullName>Ferredoxin</fullName>
    </recommendedName>
</protein>
<proteinExistence type="evidence at protein level"/>